<proteinExistence type="inferred from homology"/>
<comment type="function">
    <text evidence="1">The UvrABC repair system catalyzes the recognition and processing of DNA lesions. A damage recognition complex composed of 2 UvrA and 2 UvrB subunits scans DNA for abnormalities. Upon binding of the UvrA(2)B(2) complex to a putative damaged site, the DNA wraps around one UvrB monomer. DNA wrap is dependent on ATP binding by UvrB and probably causes local melting of the DNA helix, facilitating insertion of UvrB beta-hairpin between the DNA strands. Then UvrB probes one DNA strand for the presence of a lesion. If a lesion is found the UvrA subunits dissociate and the UvrB-DNA preincision complex is formed. This complex is subsequently bound by UvrC and the second UvrB is released. If no lesion is found, the DNA wraps around the other UvrB subunit that will check the other stand for damage.</text>
</comment>
<comment type="subunit">
    <text evidence="1">Forms a heterotetramer with UvrA during the search for lesions. Interacts with UvrC in an incision complex.</text>
</comment>
<comment type="subcellular location">
    <subcellularLocation>
        <location evidence="1">Cytoplasm</location>
    </subcellularLocation>
</comment>
<comment type="domain">
    <text evidence="1">The beta-hairpin motif is involved in DNA binding.</text>
</comment>
<comment type="similarity">
    <text evidence="1">Belongs to the UvrB family.</text>
</comment>
<evidence type="ECO:0000255" key="1">
    <source>
        <dbReference type="HAMAP-Rule" id="MF_00204"/>
    </source>
</evidence>
<keyword id="KW-0067">ATP-binding</keyword>
<keyword id="KW-0963">Cytoplasm</keyword>
<keyword id="KW-0227">DNA damage</keyword>
<keyword id="KW-0228">DNA excision</keyword>
<keyword id="KW-0234">DNA repair</keyword>
<keyword id="KW-0267">Excision nuclease</keyword>
<keyword id="KW-0347">Helicase</keyword>
<keyword id="KW-0378">Hydrolase</keyword>
<keyword id="KW-0547">Nucleotide-binding</keyword>
<keyword id="KW-0742">SOS response</keyword>
<name>UVRB_SALPK</name>
<protein>
    <recommendedName>
        <fullName evidence="1">UvrABC system protein B</fullName>
        <shortName evidence="1">Protein UvrB</shortName>
    </recommendedName>
    <alternativeName>
        <fullName evidence="1">Excinuclease ABC subunit B</fullName>
    </alternativeName>
</protein>
<sequence>MSKPFKLNSAFKPSGDQPDAIRRLEEGLEDGLAHQTLLGVTGSGKTFTIANVIADLQRPTMVLAPNKTLAAQLYGEMKEFFPENAVEYFVSYYDYYQPEAYVPSSDTFIEKDASINEHIEQMRLSATKALLERRDVVVVASVSAIYGLGDPDLYLKMMLHLTVGMLIDQRAILRRLAELQYTRNDQAFQRGTFRVRGEVIDIFPAESDDIALRVELFDEEVERLSLFDPLTGQVESTVPRYTIYPKTHYVTPRERILQAMEEIKDELADRRKVLLANNKLLEEQRLSQRTQFDLEMMNELGYCSGIENYSRFLSGRGPGEPPPTLFDYLPADGLLVVDESHVTIPQIGGMYRGDRARKETLVEYGFRLPSALDNRPLKFEEFEALAPQTIYVSATPGNYELEKSGDEVVDQVVRPTGLLDPIIEVRPVATQVDDLLSEIRQRAAINERVLVTTLTKRMAEDLTEYLEEHGERVRYLHSDIDTVERMEIIRDLRLGEFDVLVGINLLREGLDMPEVSLVAILDADKEGFLRSERSLIQTIGRAARNVNGKAILYGDKITPSMAKAIGETERRREKQQKYNEEHGITPQGLNKKVVDILALGQNIAKTKAKGKGKGRSTAKAGIVELDMTPKALQQKIHELEGQMMQHAQNLEFEEAAQIRDQLHQLRELFIAAS</sequence>
<feature type="chain" id="PRO_1000099566" description="UvrABC system protein B">
    <location>
        <begin position="1"/>
        <end position="673"/>
    </location>
</feature>
<feature type="domain" description="Helicase ATP-binding" evidence="1">
    <location>
        <begin position="26"/>
        <end position="183"/>
    </location>
</feature>
<feature type="domain" description="Helicase C-terminal" evidence="1">
    <location>
        <begin position="431"/>
        <end position="597"/>
    </location>
</feature>
<feature type="domain" description="UVR" evidence="1">
    <location>
        <begin position="633"/>
        <end position="668"/>
    </location>
</feature>
<feature type="short sequence motif" description="Beta-hairpin">
    <location>
        <begin position="92"/>
        <end position="115"/>
    </location>
</feature>
<feature type="binding site" evidence="1">
    <location>
        <begin position="39"/>
        <end position="46"/>
    </location>
    <ligand>
        <name>ATP</name>
        <dbReference type="ChEBI" id="CHEBI:30616"/>
    </ligand>
</feature>
<gene>
    <name evidence="1" type="primary">uvrB</name>
    <name type="ordered locus">SSPA1822</name>
</gene>
<reference key="1">
    <citation type="journal article" date="2009" name="BMC Genomics">
        <title>Pseudogene accumulation in the evolutionary histories of Salmonella enterica serovars Paratyphi A and Typhi.</title>
        <authorList>
            <person name="Holt K.E."/>
            <person name="Thomson N.R."/>
            <person name="Wain J."/>
            <person name="Langridge G.C."/>
            <person name="Hasan R."/>
            <person name="Bhutta Z.A."/>
            <person name="Quail M.A."/>
            <person name="Norbertczak H."/>
            <person name="Walker D."/>
            <person name="Simmonds M."/>
            <person name="White B."/>
            <person name="Bason N."/>
            <person name="Mungall K."/>
            <person name="Dougan G."/>
            <person name="Parkhill J."/>
        </authorList>
    </citation>
    <scope>NUCLEOTIDE SEQUENCE [LARGE SCALE GENOMIC DNA]</scope>
    <source>
        <strain>AKU_12601</strain>
    </source>
</reference>
<organism>
    <name type="scientific">Salmonella paratyphi A (strain AKU_12601)</name>
    <dbReference type="NCBI Taxonomy" id="554290"/>
    <lineage>
        <taxon>Bacteria</taxon>
        <taxon>Pseudomonadati</taxon>
        <taxon>Pseudomonadota</taxon>
        <taxon>Gammaproteobacteria</taxon>
        <taxon>Enterobacterales</taxon>
        <taxon>Enterobacteriaceae</taxon>
        <taxon>Salmonella</taxon>
    </lineage>
</organism>
<dbReference type="EMBL" id="FM200053">
    <property type="protein sequence ID" value="CAR60018.1"/>
    <property type="molecule type" value="Genomic_DNA"/>
</dbReference>
<dbReference type="RefSeq" id="WP_000042494.1">
    <property type="nucleotide sequence ID" value="NC_011147.1"/>
</dbReference>
<dbReference type="SMR" id="B5BC27"/>
<dbReference type="KEGG" id="sek:SSPA1822"/>
<dbReference type="HOGENOM" id="CLU_009621_2_1_6"/>
<dbReference type="Proteomes" id="UP000001869">
    <property type="component" value="Chromosome"/>
</dbReference>
<dbReference type="GO" id="GO:0005737">
    <property type="term" value="C:cytoplasm"/>
    <property type="evidence" value="ECO:0007669"/>
    <property type="project" value="UniProtKB-SubCell"/>
</dbReference>
<dbReference type="GO" id="GO:0009380">
    <property type="term" value="C:excinuclease repair complex"/>
    <property type="evidence" value="ECO:0007669"/>
    <property type="project" value="InterPro"/>
</dbReference>
<dbReference type="GO" id="GO:0005524">
    <property type="term" value="F:ATP binding"/>
    <property type="evidence" value="ECO:0007669"/>
    <property type="project" value="UniProtKB-UniRule"/>
</dbReference>
<dbReference type="GO" id="GO:0016887">
    <property type="term" value="F:ATP hydrolysis activity"/>
    <property type="evidence" value="ECO:0007669"/>
    <property type="project" value="InterPro"/>
</dbReference>
<dbReference type="GO" id="GO:0003677">
    <property type="term" value="F:DNA binding"/>
    <property type="evidence" value="ECO:0007669"/>
    <property type="project" value="UniProtKB-UniRule"/>
</dbReference>
<dbReference type="GO" id="GO:0009381">
    <property type="term" value="F:excinuclease ABC activity"/>
    <property type="evidence" value="ECO:0007669"/>
    <property type="project" value="UniProtKB-UniRule"/>
</dbReference>
<dbReference type="GO" id="GO:0004386">
    <property type="term" value="F:helicase activity"/>
    <property type="evidence" value="ECO:0007669"/>
    <property type="project" value="UniProtKB-KW"/>
</dbReference>
<dbReference type="GO" id="GO:0006289">
    <property type="term" value="P:nucleotide-excision repair"/>
    <property type="evidence" value="ECO:0007669"/>
    <property type="project" value="UniProtKB-UniRule"/>
</dbReference>
<dbReference type="GO" id="GO:0009432">
    <property type="term" value="P:SOS response"/>
    <property type="evidence" value="ECO:0007669"/>
    <property type="project" value="UniProtKB-UniRule"/>
</dbReference>
<dbReference type="CDD" id="cd17916">
    <property type="entry name" value="DEXHc_UvrB"/>
    <property type="match status" value="1"/>
</dbReference>
<dbReference type="CDD" id="cd18790">
    <property type="entry name" value="SF2_C_UvrB"/>
    <property type="match status" value="1"/>
</dbReference>
<dbReference type="FunFam" id="3.40.50.300:FF:000257">
    <property type="entry name" value="UvrABC system protein B"/>
    <property type="match status" value="1"/>
</dbReference>
<dbReference type="FunFam" id="3.40.50.300:FF:000401">
    <property type="entry name" value="UvrABC system protein B"/>
    <property type="match status" value="1"/>
</dbReference>
<dbReference type="FunFam" id="3.40.50.300:FF:000477">
    <property type="entry name" value="UvrABC system protein B"/>
    <property type="match status" value="1"/>
</dbReference>
<dbReference type="Gene3D" id="6.10.140.240">
    <property type="match status" value="1"/>
</dbReference>
<dbReference type="Gene3D" id="3.40.50.300">
    <property type="entry name" value="P-loop containing nucleotide triphosphate hydrolases"/>
    <property type="match status" value="3"/>
</dbReference>
<dbReference type="Gene3D" id="4.10.860.10">
    <property type="entry name" value="UVR domain"/>
    <property type="match status" value="1"/>
</dbReference>
<dbReference type="HAMAP" id="MF_00204">
    <property type="entry name" value="UvrB"/>
    <property type="match status" value="1"/>
</dbReference>
<dbReference type="InterPro" id="IPR006935">
    <property type="entry name" value="Helicase/UvrB_N"/>
</dbReference>
<dbReference type="InterPro" id="IPR014001">
    <property type="entry name" value="Helicase_ATP-bd"/>
</dbReference>
<dbReference type="InterPro" id="IPR001650">
    <property type="entry name" value="Helicase_C-like"/>
</dbReference>
<dbReference type="InterPro" id="IPR027417">
    <property type="entry name" value="P-loop_NTPase"/>
</dbReference>
<dbReference type="InterPro" id="IPR001943">
    <property type="entry name" value="UVR_dom"/>
</dbReference>
<dbReference type="InterPro" id="IPR036876">
    <property type="entry name" value="UVR_dom_sf"/>
</dbReference>
<dbReference type="InterPro" id="IPR004807">
    <property type="entry name" value="UvrB"/>
</dbReference>
<dbReference type="InterPro" id="IPR041471">
    <property type="entry name" value="UvrB_inter"/>
</dbReference>
<dbReference type="InterPro" id="IPR024759">
    <property type="entry name" value="UvrB_YAD/RRR_dom"/>
</dbReference>
<dbReference type="NCBIfam" id="NF003673">
    <property type="entry name" value="PRK05298.1"/>
    <property type="match status" value="1"/>
</dbReference>
<dbReference type="NCBIfam" id="TIGR00631">
    <property type="entry name" value="uvrb"/>
    <property type="match status" value="1"/>
</dbReference>
<dbReference type="PANTHER" id="PTHR24029">
    <property type="entry name" value="UVRABC SYSTEM PROTEIN B"/>
    <property type="match status" value="1"/>
</dbReference>
<dbReference type="PANTHER" id="PTHR24029:SF0">
    <property type="entry name" value="UVRABC SYSTEM PROTEIN B"/>
    <property type="match status" value="1"/>
</dbReference>
<dbReference type="Pfam" id="PF00271">
    <property type="entry name" value="Helicase_C"/>
    <property type="match status" value="1"/>
</dbReference>
<dbReference type="Pfam" id="PF04851">
    <property type="entry name" value="ResIII"/>
    <property type="match status" value="1"/>
</dbReference>
<dbReference type="Pfam" id="PF02151">
    <property type="entry name" value="UVR"/>
    <property type="match status" value="1"/>
</dbReference>
<dbReference type="Pfam" id="PF12344">
    <property type="entry name" value="UvrB"/>
    <property type="match status" value="1"/>
</dbReference>
<dbReference type="Pfam" id="PF17757">
    <property type="entry name" value="UvrB_inter"/>
    <property type="match status" value="1"/>
</dbReference>
<dbReference type="SMART" id="SM00487">
    <property type="entry name" value="DEXDc"/>
    <property type="match status" value="1"/>
</dbReference>
<dbReference type="SMART" id="SM00490">
    <property type="entry name" value="HELICc"/>
    <property type="match status" value="1"/>
</dbReference>
<dbReference type="SUPFAM" id="SSF46600">
    <property type="entry name" value="C-terminal UvrC-binding domain of UvrB"/>
    <property type="match status" value="1"/>
</dbReference>
<dbReference type="SUPFAM" id="SSF52540">
    <property type="entry name" value="P-loop containing nucleoside triphosphate hydrolases"/>
    <property type="match status" value="2"/>
</dbReference>
<dbReference type="PROSITE" id="PS51192">
    <property type="entry name" value="HELICASE_ATP_BIND_1"/>
    <property type="match status" value="1"/>
</dbReference>
<dbReference type="PROSITE" id="PS51194">
    <property type="entry name" value="HELICASE_CTER"/>
    <property type="match status" value="1"/>
</dbReference>
<dbReference type="PROSITE" id="PS50151">
    <property type="entry name" value="UVR"/>
    <property type="match status" value="1"/>
</dbReference>
<accession>B5BC27</accession>